<feature type="chain" id="PRO_0000299770" description="Putative uncharacterized protein BUD19">
    <location>
        <begin position="1"/>
        <end position="102"/>
    </location>
</feature>
<proteinExistence type="uncertain"/>
<organism>
    <name type="scientific">Saccharomyces cerevisiae (strain ATCC 204508 / S288c)</name>
    <name type="common">Baker's yeast</name>
    <dbReference type="NCBI Taxonomy" id="559292"/>
    <lineage>
        <taxon>Eukaryota</taxon>
        <taxon>Fungi</taxon>
        <taxon>Dikarya</taxon>
        <taxon>Ascomycota</taxon>
        <taxon>Saccharomycotina</taxon>
        <taxon>Saccharomycetes</taxon>
        <taxon>Saccharomycetales</taxon>
        <taxon>Saccharomycetaceae</taxon>
        <taxon>Saccharomyces</taxon>
    </lineage>
</organism>
<protein>
    <recommendedName>
        <fullName>Putative uncharacterized protein BUD19</fullName>
    </recommendedName>
</protein>
<reference key="1">
    <citation type="journal article" date="1996" name="EMBO J.">
        <title>Complete nucleotide sequence of Saccharomyces cerevisiae chromosome X.</title>
        <authorList>
            <person name="Galibert F."/>
            <person name="Alexandraki D."/>
            <person name="Baur A."/>
            <person name="Boles E."/>
            <person name="Chalwatzis N."/>
            <person name="Chuat J.-C."/>
            <person name="Coster F."/>
            <person name="Cziepluch C."/>
            <person name="de Haan M."/>
            <person name="Domdey H."/>
            <person name="Durand P."/>
            <person name="Entian K.-D."/>
            <person name="Gatius M."/>
            <person name="Goffeau A."/>
            <person name="Grivell L.A."/>
            <person name="Hennemann A."/>
            <person name="Herbert C.J."/>
            <person name="Heumann K."/>
            <person name="Hilger F."/>
            <person name="Hollenberg C.P."/>
            <person name="Huang M.-E."/>
            <person name="Jacq C."/>
            <person name="Jauniaux J.-C."/>
            <person name="Katsoulou C."/>
            <person name="Kirchrath L."/>
            <person name="Kleine K."/>
            <person name="Kordes E."/>
            <person name="Koetter P."/>
            <person name="Liebl S."/>
            <person name="Louis E.J."/>
            <person name="Manus V."/>
            <person name="Mewes H.-W."/>
            <person name="Miosga T."/>
            <person name="Obermaier B."/>
            <person name="Perea J."/>
            <person name="Pohl T.M."/>
            <person name="Portetelle D."/>
            <person name="Pujol A."/>
            <person name="Purnelle B."/>
            <person name="Ramezani Rad M."/>
            <person name="Rasmussen S.W."/>
            <person name="Rose M."/>
            <person name="Rossau R."/>
            <person name="Schaaff-Gerstenschlaeger I."/>
            <person name="Smits P.H.M."/>
            <person name="Scarcez T."/>
            <person name="Soriano N."/>
            <person name="To Van D."/>
            <person name="Tzermia M."/>
            <person name="Van Broekhoven A."/>
            <person name="Vandenbol M."/>
            <person name="Wedler H."/>
            <person name="von Wettstein D."/>
            <person name="Wambutt R."/>
            <person name="Zagulski M."/>
            <person name="Zollner A."/>
            <person name="Karpfinger-Hartl L."/>
        </authorList>
    </citation>
    <scope>NUCLEOTIDE SEQUENCE [LARGE SCALE GENOMIC DNA]</scope>
    <source>
        <strain>ATCC 204508 / S288c</strain>
    </source>
</reference>
<reference key="2">
    <citation type="journal article" date="2014" name="G3 (Bethesda)">
        <title>The reference genome sequence of Saccharomyces cerevisiae: Then and now.</title>
        <authorList>
            <person name="Engel S.R."/>
            <person name="Dietrich F.S."/>
            <person name="Fisk D.G."/>
            <person name="Binkley G."/>
            <person name="Balakrishnan R."/>
            <person name="Costanzo M.C."/>
            <person name="Dwight S.S."/>
            <person name="Hitz B.C."/>
            <person name="Karra K."/>
            <person name="Nash R.S."/>
            <person name="Weng S."/>
            <person name="Wong E.D."/>
            <person name="Lloyd P."/>
            <person name="Skrzypek M.S."/>
            <person name="Miyasato S.R."/>
            <person name="Simison M."/>
            <person name="Cherry J.M."/>
        </authorList>
    </citation>
    <scope>GENOME REANNOTATION</scope>
    <source>
        <strain>ATCC 204508 / S288c</strain>
    </source>
</reference>
<reference key="3">
    <citation type="journal article" date="2001" name="Mol. Biol. Cell">
        <title>A genomic study of the bipolar bud site selection pattern in Saccharomyces cerevisiae.</title>
        <authorList>
            <person name="Ni L."/>
            <person name="Snyder M."/>
        </authorList>
    </citation>
    <scope>DISRUPTION PHENOTYPE</scope>
</reference>
<dbReference type="EMBL" id="Z49464">
    <property type="protein sequence ID" value="CAA89484.1"/>
    <property type="molecule type" value="Genomic_DNA"/>
</dbReference>
<dbReference type="PIR" id="S56971">
    <property type="entry name" value="S56971"/>
</dbReference>
<dbReference type="IntAct" id="O94143">
    <property type="interactions" value="1"/>
</dbReference>
<dbReference type="STRING" id="4932.YJL188C"/>
<dbReference type="PaxDb" id="4932-YJL188C"/>
<dbReference type="AGR" id="SGD:S000003724"/>
<dbReference type="SGD" id="S000003724">
    <property type="gene designation" value="BUD19"/>
</dbReference>
<dbReference type="HOGENOM" id="CLU_2279646_0_0_1"/>
<dbReference type="GO" id="GO:0000282">
    <property type="term" value="P:cellular bud site selection"/>
    <property type="evidence" value="ECO:0007001"/>
    <property type="project" value="SGD"/>
</dbReference>
<sequence>MTKSLKHKYVLRLDVHLGSSPVSSLSVVTDSVVGSQSDPLWQWSVLLLSLSHFLLDSERLLSLIKRETYRAHTKCTIVKNVSNNVQTHQYDAFTDPRQYHLT</sequence>
<accession>O94143</accession>
<comment type="disruption phenotype">
    <text evidence="1">Diploid deletion displays a weak budding pattern phenotype in a systematic assay.</text>
</comment>
<comment type="miscellaneous">
    <text evidence="2">Partially overlaps RPL39. Disruption phenotypes caused by deletion of this gene may also be a result of a defect in its overlapping gene.</text>
</comment>
<comment type="caution">
    <text evidence="3">Product of a dubious gene prediction unlikely to encode a functional protein. Because of that it is not part of the S.cerevisiae S288c complete/reference proteome set.</text>
</comment>
<name>BUD19_YEAST</name>
<gene>
    <name type="primary">BUD19</name>
    <name type="ordered locus">YJL188C</name>
</gene>
<evidence type="ECO:0000269" key="1">
    <source>
    </source>
</evidence>
<evidence type="ECO:0000305" key="2"/>
<evidence type="ECO:0000305" key="3">
    <source>
    </source>
</evidence>